<accession>Q87DL0</accession>
<proteinExistence type="inferred from homology"/>
<sequence length="210" mass="23633">MLMFSRFRYIFFAVALLSGPVCAGARADLSAFTRGLKTLQGHFSQEVIDTQGRVKERSNGTVALSLPNLLRWECDAPYKQLVVADGKRVWLFDPDLNQASVLLQDNEERNSPLIALIDPIQLDRKYDVSEEVAMRDGLRWLSLRPRGSTEASFQSASFGFSQTQLARMELVDNLGQRTVIAFSGWQRNPVFAVNTFRFTPGKNVDVIGDR</sequence>
<comment type="function">
    <text evidence="1">Participates in the translocation of lipoproteins from the inner membrane to the outer membrane. Only forms a complex with a lipoprotein if the residue after the N-terminal Cys is not an aspartate (The Asp acts as a targeting signal to indicate that the lipoprotein should stay in the inner membrane).</text>
</comment>
<comment type="subunit">
    <text evidence="1">Monomer.</text>
</comment>
<comment type="subcellular location">
    <subcellularLocation>
        <location evidence="1">Periplasm</location>
    </subcellularLocation>
</comment>
<comment type="similarity">
    <text evidence="1">Belongs to the LolA family.</text>
</comment>
<comment type="sequence caution" evidence="2">
    <conflict type="erroneous initiation">
        <sequence resource="EMBL-CDS" id="AAO28543"/>
    </conflict>
</comment>
<organism>
    <name type="scientific">Xylella fastidiosa (strain Temecula1 / ATCC 700964)</name>
    <dbReference type="NCBI Taxonomy" id="183190"/>
    <lineage>
        <taxon>Bacteria</taxon>
        <taxon>Pseudomonadati</taxon>
        <taxon>Pseudomonadota</taxon>
        <taxon>Gammaproteobacteria</taxon>
        <taxon>Lysobacterales</taxon>
        <taxon>Lysobacteraceae</taxon>
        <taxon>Xylella</taxon>
    </lineage>
</organism>
<evidence type="ECO:0000255" key="1">
    <source>
        <dbReference type="HAMAP-Rule" id="MF_00240"/>
    </source>
</evidence>
<evidence type="ECO:0000305" key="2"/>
<gene>
    <name evidence="1" type="primary">lolA</name>
    <name type="ordered locus">PD_0672</name>
</gene>
<feature type="signal peptide" evidence="1">
    <location>
        <begin position="1"/>
        <end position="23"/>
    </location>
</feature>
<feature type="chain" id="PRO_0000018288" description="Outer-membrane lipoprotein carrier protein">
    <location>
        <begin position="24"/>
        <end position="210"/>
    </location>
</feature>
<name>LOLA_XYLFT</name>
<dbReference type="EMBL" id="AE009442">
    <property type="protein sequence ID" value="AAO28543.1"/>
    <property type="status" value="ALT_INIT"/>
    <property type="molecule type" value="Genomic_DNA"/>
</dbReference>
<dbReference type="SMR" id="Q87DL0"/>
<dbReference type="KEGG" id="xft:PD_0672"/>
<dbReference type="HOGENOM" id="CLU_087560_0_0_6"/>
<dbReference type="Proteomes" id="UP000002516">
    <property type="component" value="Chromosome"/>
</dbReference>
<dbReference type="GO" id="GO:0030288">
    <property type="term" value="C:outer membrane-bounded periplasmic space"/>
    <property type="evidence" value="ECO:0007669"/>
    <property type="project" value="TreeGrafter"/>
</dbReference>
<dbReference type="GO" id="GO:0044874">
    <property type="term" value="P:lipoprotein localization to outer membrane"/>
    <property type="evidence" value="ECO:0007669"/>
    <property type="project" value="UniProtKB-UniRule"/>
</dbReference>
<dbReference type="GO" id="GO:0042953">
    <property type="term" value="P:lipoprotein transport"/>
    <property type="evidence" value="ECO:0007669"/>
    <property type="project" value="InterPro"/>
</dbReference>
<dbReference type="CDD" id="cd16325">
    <property type="entry name" value="LolA"/>
    <property type="match status" value="1"/>
</dbReference>
<dbReference type="Gene3D" id="2.50.20.10">
    <property type="entry name" value="Lipoprotein localisation LolA/LolB/LppX"/>
    <property type="match status" value="1"/>
</dbReference>
<dbReference type="HAMAP" id="MF_00240">
    <property type="entry name" value="LolA"/>
    <property type="match status" value="1"/>
</dbReference>
<dbReference type="InterPro" id="IPR029046">
    <property type="entry name" value="LolA/LolB/LppX"/>
</dbReference>
<dbReference type="InterPro" id="IPR004564">
    <property type="entry name" value="OM_lipoprot_carrier_LolA-like"/>
</dbReference>
<dbReference type="InterPro" id="IPR018323">
    <property type="entry name" value="OM_lipoprot_carrier_LolA_Pbac"/>
</dbReference>
<dbReference type="NCBIfam" id="TIGR00547">
    <property type="entry name" value="lolA"/>
    <property type="match status" value="1"/>
</dbReference>
<dbReference type="PANTHER" id="PTHR35869">
    <property type="entry name" value="OUTER-MEMBRANE LIPOPROTEIN CARRIER PROTEIN"/>
    <property type="match status" value="1"/>
</dbReference>
<dbReference type="PANTHER" id="PTHR35869:SF1">
    <property type="entry name" value="OUTER-MEMBRANE LIPOPROTEIN CARRIER PROTEIN"/>
    <property type="match status" value="1"/>
</dbReference>
<dbReference type="Pfam" id="PF03548">
    <property type="entry name" value="LolA"/>
    <property type="match status" value="1"/>
</dbReference>
<dbReference type="SUPFAM" id="SSF89392">
    <property type="entry name" value="Prokaryotic lipoproteins and lipoprotein localization factors"/>
    <property type="match status" value="1"/>
</dbReference>
<protein>
    <recommendedName>
        <fullName evidence="1">Outer-membrane lipoprotein carrier protein</fullName>
    </recommendedName>
</protein>
<keyword id="KW-0143">Chaperone</keyword>
<keyword id="KW-0574">Periplasm</keyword>
<keyword id="KW-0653">Protein transport</keyword>
<keyword id="KW-1185">Reference proteome</keyword>
<keyword id="KW-0732">Signal</keyword>
<keyword id="KW-0813">Transport</keyword>
<reference key="1">
    <citation type="journal article" date="2003" name="J. Bacteriol.">
        <title>Comparative analyses of the complete genome sequences of Pierce's disease and citrus variegated chlorosis strains of Xylella fastidiosa.</title>
        <authorList>
            <person name="Van Sluys M.A."/>
            <person name="de Oliveira M.C."/>
            <person name="Monteiro-Vitorello C.B."/>
            <person name="Miyaki C.Y."/>
            <person name="Furlan L.R."/>
            <person name="Camargo L.E.A."/>
            <person name="da Silva A.C.R."/>
            <person name="Moon D.H."/>
            <person name="Takita M.A."/>
            <person name="Lemos E.G.M."/>
            <person name="Machado M.A."/>
            <person name="Ferro M.I.T."/>
            <person name="da Silva F.R."/>
            <person name="Goldman M.H.S."/>
            <person name="Goldman G.H."/>
            <person name="Lemos M.V.F."/>
            <person name="El-Dorry H."/>
            <person name="Tsai S.M."/>
            <person name="Carrer H."/>
            <person name="Carraro D.M."/>
            <person name="de Oliveira R.C."/>
            <person name="Nunes L.R."/>
            <person name="Siqueira W.J."/>
            <person name="Coutinho L.L."/>
            <person name="Kimura E.T."/>
            <person name="Ferro E.S."/>
            <person name="Harakava R."/>
            <person name="Kuramae E.E."/>
            <person name="Marino C.L."/>
            <person name="Giglioti E."/>
            <person name="Abreu I.L."/>
            <person name="Alves L.M.C."/>
            <person name="do Amaral A.M."/>
            <person name="Baia G.S."/>
            <person name="Blanco S.R."/>
            <person name="Brito M.S."/>
            <person name="Cannavan F.S."/>
            <person name="Celestino A.V."/>
            <person name="da Cunha A.F."/>
            <person name="Fenille R.C."/>
            <person name="Ferro J.A."/>
            <person name="Formighieri E.F."/>
            <person name="Kishi L.T."/>
            <person name="Leoni S.G."/>
            <person name="Oliveira A.R."/>
            <person name="Rosa V.E. Jr."/>
            <person name="Sassaki F.T."/>
            <person name="Sena J.A.D."/>
            <person name="de Souza A.A."/>
            <person name="Truffi D."/>
            <person name="Tsukumo F."/>
            <person name="Yanai G.M."/>
            <person name="Zaros L.G."/>
            <person name="Civerolo E.L."/>
            <person name="Simpson A.J.G."/>
            <person name="Almeida N.F. Jr."/>
            <person name="Setubal J.C."/>
            <person name="Kitajima J.P."/>
        </authorList>
    </citation>
    <scope>NUCLEOTIDE SEQUENCE [LARGE SCALE GENOMIC DNA]</scope>
    <source>
        <strain>Temecula1 / ATCC 700964</strain>
    </source>
</reference>